<accession>P38526</accession>
<comment type="function">
    <text evidence="1">One of the primary rRNA binding proteins, it binds directly to 16S rRNA where it nucleates assembly of the head domain of the 30S subunit. Is located at the subunit interface close to the decoding center, probably blocks exit of the E-site tRNA.</text>
</comment>
<comment type="subunit">
    <text evidence="1">Part of the 30S ribosomal subunit. Contacts proteins S9 and S11.</text>
</comment>
<comment type="interaction">
    <interactant intactId="EBI-2463521">
        <id>P38526</id>
    </interactant>
    <interactant intactId="EBI-2463534">
        <id>Q9WZF8</id>
        <label>tig</label>
    </interactant>
    <organismsDiffer>false</organismsDiffer>
    <experiments>5</experiments>
</comment>
<comment type="similarity">
    <text evidence="1">Belongs to the universal ribosomal protein uS7 family.</text>
</comment>
<gene>
    <name evidence="1" type="primary">rpsG</name>
    <name type="ordered locus">TM_1504</name>
</gene>
<proteinExistence type="evidence at protein level"/>
<reference key="1">
    <citation type="journal article" date="1999" name="Nature">
        <title>Evidence for lateral gene transfer between Archaea and Bacteria from genome sequence of Thermotoga maritima.</title>
        <authorList>
            <person name="Nelson K.E."/>
            <person name="Clayton R.A."/>
            <person name="Gill S.R."/>
            <person name="Gwinn M.L."/>
            <person name="Dodson R.J."/>
            <person name="Haft D.H."/>
            <person name="Hickey E.K."/>
            <person name="Peterson J.D."/>
            <person name="Nelson W.C."/>
            <person name="Ketchum K.A."/>
            <person name="McDonald L.A."/>
            <person name="Utterback T.R."/>
            <person name="Malek J.A."/>
            <person name="Linher K.D."/>
            <person name="Garrett M.M."/>
            <person name="Stewart A.M."/>
            <person name="Cotton M.D."/>
            <person name="Pratt M.S."/>
            <person name="Phillips C.A."/>
            <person name="Richardson D.L."/>
            <person name="Heidelberg J.F."/>
            <person name="Sutton G.G."/>
            <person name="Fleischmann R.D."/>
            <person name="Eisen J.A."/>
            <person name="White O."/>
            <person name="Salzberg S.L."/>
            <person name="Smith H.O."/>
            <person name="Venter J.C."/>
            <person name="Fraser C.M."/>
        </authorList>
    </citation>
    <scope>NUCLEOTIDE SEQUENCE [LARGE SCALE GENOMIC DNA]</scope>
    <source>
        <strain>ATCC 43589 / DSM 3109 / JCM 10099 / NBRC 100826 / MSB8</strain>
    </source>
</reference>
<reference key="2">
    <citation type="journal article" date="1991" name="J. Mol. Evol.">
        <title>Phylogenetic depth of Thermotoga maritima inferred from analysis of the fus gene: amino acid sequence of elongation factor G and organization of the Thermotoga str operon.</title>
        <authorList>
            <person name="Tiboni O."/>
            <person name="Cantoni R."/>
            <person name="Creti R."/>
            <person name="Cammarano P."/>
            <person name="Sanangelantoni A.M."/>
        </authorList>
    </citation>
    <scope>NUCLEOTIDE SEQUENCE [GENOMIC DNA] OF 48-155</scope>
    <source>
        <strain>ATCC 43589 / DSM 3109 / JCM 10099 / NBRC 100826 / MSB8</strain>
    </source>
</reference>
<evidence type="ECO:0000255" key="1">
    <source>
        <dbReference type="HAMAP-Rule" id="MF_00480"/>
    </source>
</evidence>
<evidence type="ECO:0000305" key="2"/>
<evidence type="ECO:0007829" key="3">
    <source>
        <dbReference type="PDB" id="3GTY"/>
    </source>
</evidence>
<organism>
    <name type="scientific">Thermotoga maritima (strain ATCC 43589 / DSM 3109 / JCM 10099 / NBRC 100826 / MSB8)</name>
    <dbReference type="NCBI Taxonomy" id="243274"/>
    <lineage>
        <taxon>Bacteria</taxon>
        <taxon>Thermotogati</taxon>
        <taxon>Thermotogota</taxon>
        <taxon>Thermotogae</taxon>
        <taxon>Thermotogales</taxon>
        <taxon>Thermotogaceae</taxon>
        <taxon>Thermotoga</taxon>
    </lineage>
</organism>
<protein>
    <recommendedName>
        <fullName evidence="1">Small ribosomal subunit protein uS7</fullName>
    </recommendedName>
    <alternativeName>
        <fullName evidence="2">30S ribosomal protein S7</fullName>
    </alternativeName>
</protein>
<keyword id="KW-0002">3D-structure</keyword>
<keyword id="KW-1185">Reference proteome</keyword>
<keyword id="KW-0687">Ribonucleoprotein</keyword>
<keyword id="KW-0689">Ribosomal protein</keyword>
<keyword id="KW-0694">RNA-binding</keyword>
<keyword id="KW-0699">rRNA-binding</keyword>
<keyword id="KW-0820">tRNA-binding</keyword>
<feature type="chain" id="PRO_0000124367" description="Small ribosomal subunit protein uS7">
    <location>
        <begin position="1"/>
        <end position="155"/>
    </location>
</feature>
<feature type="sequence conflict" description="In Ref. 2; AAB19928." evidence="2" ref="2">
    <original>E</original>
    <variation>Q</variation>
    <location>
        <position position="105"/>
    </location>
</feature>
<feature type="strand" evidence="3">
    <location>
        <begin position="15"/>
        <end position="17"/>
    </location>
</feature>
<feature type="helix" evidence="3">
    <location>
        <begin position="20"/>
        <end position="29"/>
    </location>
</feature>
<feature type="turn" evidence="3">
    <location>
        <begin position="35"/>
        <end position="37"/>
    </location>
</feature>
<feature type="helix" evidence="3">
    <location>
        <begin position="38"/>
        <end position="51"/>
    </location>
</feature>
<feature type="helix" evidence="3">
    <location>
        <begin position="57"/>
        <end position="68"/>
    </location>
</feature>
<feature type="strand" evidence="3">
    <location>
        <begin position="71"/>
        <end position="77"/>
    </location>
</feature>
<feature type="strand" evidence="3">
    <location>
        <begin position="79"/>
        <end position="82"/>
    </location>
</feature>
<feature type="strand" evidence="3">
    <location>
        <begin position="84"/>
        <end position="89"/>
    </location>
</feature>
<feature type="helix" evidence="3">
    <location>
        <begin position="93"/>
        <end position="108"/>
    </location>
</feature>
<feature type="strand" evidence="3">
    <location>
        <begin position="111"/>
        <end position="113"/>
    </location>
</feature>
<feature type="helix" evidence="3">
    <location>
        <begin position="115"/>
        <end position="127"/>
    </location>
</feature>
<feature type="helix" evidence="3">
    <location>
        <begin position="132"/>
        <end position="144"/>
    </location>
</feature>
<feature type="helix" evidence="3">
    <location>
        <begin position="148"/>
        <end position="150"/>
    </location>
</feature>
<dbReference type="EMBL" id="AE000512">
    <property type="protein sequence ID" value="AAD36571.1"/>
    <property type="molecule type" value="Genomic_DNA"/>
</dbReference>
<dbReference type="EMBL" id="S57688">
    <property type="protein sequence ID" value="AAB19928.1"/>
    <property type="molecule type" value="Genomic_DNA"/>
</dbReference>
<dbReference type="PIR" id="A72244">
    <property type="entry name" value="A72244"/>
</dbReference>
<dbReference type="RefSeq" id="NP_229304.1">
    <property type="nucleotide sequence ID" value="NC_000853.1"/>
</dbReference>
<dbReference type="RefSeq" id="WP_004081843.1">
    <property type="nucleotide sequence ID" value="NZ_CP011107.1"/>
</dbReference>
<dbReference type="PDB" id="3GTY">
    <property type="method" value="X-ray"/>
    <property type="resolution" value="3.40 A"/>
    <property type="chains" value="S=9-155"/>
</dbReference>
<dbReference type="PDBsum" id="3GTY"/>
<dbReference type="SMR" id="P38526"/>
<dbReference type="FunCoup" id="P38526">
    <property type="interactions" value="391"/>
</dbReference>
<dbReference type="IntAct" id="P38526">
    <property type="interactions" value="1"/>
</dbReference>
<dbReference type="STRING" id="243274.TM_1504"/>
<dbReference type="PaxDb" id="243274-THEMA_06780"/>
<dbReference type="DNASU" id="897994"/>
<dbReference type="EnsemblBacteria" id="AAD36571">
    <property type="protein sequence ID" value="AAD36571"/>
    <property type="gene ID" value="TM_1504"/>
</dbReference>
<dbReference type="KEGG" id="tma:TM1504"/>
<dbReference type="KEGG" id="tmi:THEMA_06780"/>
<dbReference type="KEGG" id="tmm:Tmari_1512"/>
<dbReference type="KEGG" id="tmw:THMA_1536"/>
<dbReference type="eggNOG" id="COG0049">
    <property type="taxonomic scope" value="Bacteria"/>
</dbReference>
<dbReference type="InParanoid" id="P38526"/>
<dbReference type="OrthoDB" id="9807653at2"/>
<dbReference type="EvolutionaryTrace" id="P38526"/>
<dbReference type="Proteomes" id="UP000008183">
    <property type="component" value="Chromosome"/>
</dbReference>
<dbReference type="GO" id="GO:0022627">
    <property type="term" value="C:cytosolic small ribosomal subunit"/>
    <property type="evidence" value="ECO:0000318"/>
    <property type="project" value="GO_Central"/>
</dbReference>
<dbReference type="GO" id="GO:0005840">
    <property type="term" value="C:ribosome"/>
    <property type="evidence" value="ECO:0000318"/>
    <property type="project" value="GO_Central"/>
</dbReference>
<dbReference type="GO" id="GO:0003729">
    <property type="term" value="F:mRNA binding"/>
    <property type="evidence" value="ECO:0000318"/>
    <property type="project" value="GO_Central"/>
</dbReference>
<dbReference type="GO" id="GO:0019843">
    <property type="term" value="F:rRNA binding"/>
    <property type="evidence" value="ECO:0000318"/>
    <property type="project" value="GO_Central"/>
</dbReference>
<dbReference type="GO" id="GO:0003735">
    <property type="term" value="F:structural constituent of ribosome"/>
    <property type="evidence" value="ECO:0000318"/>
    <property type="project" value="GO_Central"/>
</dbReference>
<dbReference type="GO" id="GO:0000049">
    <property type="term" value="F:tRNA binding"/>
    <property type="evidence" value="ECO:0007669"/>
    <property type="project" value="UniProtKB-UniRule"/>
</dbReference>
<dbReference type="GO" id="GO:0000028">
    <property type="term" value="P:ribosomal small subunit assembly"/>
    <property type="evidence" value="ECO:0000318"/>
    <property type="project" value="GO_Central"/>
</dbReference>
<dbReference type="GO" id="GO:0006412">
    <property type="term" value="P:translation"/>
    <property type="evidence" value="ECO:0000318"/>
    <property type="project" value="GO_Central"/>
</dbReference>
<dbReference type="CDD" id="cd14869">
    <property type="entry name" value="uS7_Bacteria"/>
    <property type="match status" value="1"/>
</dbReference>
<dbReference type="FunFam" id="1.10.455.10:FF:000001">
    <property type="entry name" value="30S ribosomal protein S7"/>
    <property type="match status" value="1"/>
</dbReference>
<dbReference type="Gene3D" id="1.10.455.10">
    <property type="entry name" value="Ribosomal protein S7 domain"/>
    <property type="match status" value="1"/>
</dbReference>
<dbReference type="HAMAP" id="MF_00480_B">
    <property type="entry name" value="Ribosomal_uS7_B"/>
    <property type="match status" value="1"/>
</dbReference>
<dbReference type="InterPro" id="IPR000235">
    <property type="entry name" value="Ribosomal_uS7"/>
</dbReference>
<dbReference type="InterPro" id="IPR005717">
    <property type="entry name" value="Ribosomal_uS7_bac/org-type"/>
</dbReference>
<dbReference type="InterPro" id="IPR020606">
    <property type="entry name" value="Ribosomal_uS7_CS"/>
</dbReference>
<dbReference type="InterPro" id="IPR023798">
    <property type="entry name" value="Ribosomal_uS7_dom"/>
</dbReference>
<dbReference type="InterPro" id="IPR036823">
    <property type="entry name" value="Ribosomal_uS7_dom_sf"/>
</dbReference>
<dbReference type="NCBIfam" id="TIGR01029">
    <property type="entry name" value="rpsG_bact"/>
    <property type="match status" value="1"/>
</dbReference>
<dbReference type="PANTHER" id="PTHR11205">
    <property type="entry name" value="RIBOSOMAL PROTEIN S7"/>
    <property type="match status" value="1"/>
</dbReference>
<dbReference type="Pfam" id="PF00177">
    <property type="entry name" value="Ribosomal_S7"/>
    <property type="match status" value="1"/>
</dbReference>
<dbReference type="PIRSF" id="PIRSF002122">
    <property type="entry name" value="RPS7p_RPS7a_RPS5e_RPS7o"/>
    <property type="match status" value="1"/>
</dbReference>
<dbReference type="SUPFAM" id="SSF47973">
    <property type="entry name" value="Ribosomal protein S7"/>
    <property type="match status" value="1"/>
</dbReference>
<dbReference type="PROSITE" id="PS00052">
    <property type="entry name" value="RIBOSOMAL_S7"/>
    <property type="match status" value="1"/>
</dbReference>
<sequence>MRRRRAEKRQIPPDPVFGDVLVAKLINRVMWDGKKTIAQKIVYGAFDIIREKTKKDPLEVFRQAVENVKPVLEVRPRRVGGATYQVPIEVQEPRRTSLALRWIVEAARAKKGRPMKEKLAEEIIAAYNNTGTAIKKKEDTHRMAEANRAFAHYRW</sequence>
<name>RS7_THEMA</name>